<keyword id="KW-1003">Cell membrane</keyword>
<keyword id="KW-0472">Membrane</keyword>
<keyword id="KW-1185">Reference proteome</keyword>
<keyword id="KW-0812">Transmembrane</keyword>
<keyword id="KW-1133">Transmembrane helix</keyword>
<evidence type="ECO:0000255" key="1"/>
<evidence type="ECO:0000305" key="2"/>
<protein>
    <recommendedName>
        <fullName>Putative membrane protein MJ1562</fullName>
    </recommendedName>
</protein>
<gene>
    <name type="ordered locus">MJ1562</name>
</gene>
<reference key="1">
    <citation type="journal article" date="1996" name="Science">
        <title>Complete genome sequence of the methanogenic archaeon, Methanococcus jannaschii.</title>
        <authorList>
            <person name="Bult C.J."/>
            <person name="White O."/>
            <person name="Olsen G.J."/>
            <person name="Zhou L."/>
            <person name="Fleischmann R.D."/>
            <person name="Sutton G.G."/>
            <person name="Blake J.A."/>
            <person name="FitzGerald L.M."/>
            <person name="Clayton R.A."/>
            <person name="Gocayne J.D."/>
            <person name="Kerlavage A.R."/>
            <person name="Dougherty B.A."/>
            <person name="Tomb J.-F."/>
            <person name="Adams M.D."/>
            <person name="Reich C.I."/>
            <person name="Overbeek R."/>
            <person name="Kirkness E.F."/>
            <person name="Weinstock K.G."/>
            <person name="Merrick J.M."/>
            <person name="Glodek A."/>
            <person name="Scott J.L."/>
            <person name="Geoghagen N.S.M."/>
            <person name="Weidman J.F."/>
            <person name="Fuhrmann J.L."/>
            <person name="Nguyen D."/>
            <person name="Utterback T.R."/>
            <person name="Kelley J.M."/>
            <person name="Peterson J.D."/>
            <person name="Sadow P.W."/>
            <person name="Hanna M.C."/>
            <person name="Cotton M.D."/>
            <person name="Roberts K.M."/>
            <person name="Hurst M.A."/>
            <person name="Kaine B.P."/>
            <person name="Borodovsky M."/>
            <person name="Klenk H.-P."/>
            <person name="Fraser C.M."/>
            <person name="Smith H.O."/>
            <person name="Woese C.R."/>
            <person name="Venter J.C."/>
        </authorList>
    </citation>
    <scope>NUCLEOTIDE SEQUENCE [LARGE SCALE GENOMIC DNA]</scope>
    <source>
        <strain>ATCC 43067 / DSM 2661 / JAL-1 / JCM 10045 / NBRC 100440</strain>
    </source>
</reference>
<proteinExistence type="inferred from homology"/>
<feature type="chain" id="PRO_0000103587" description="Putative membrane protein MJ1562">
    <location>
        <begin position="1"/>
        <end position="388"/>
    </location>
</feature>
<feature type="transmembrane region" description="Helical" evidence="1">
    <location>
        <begin position="22"/>
        <end position="42"/>
    </location>
</feature>
<feature type="transmembrane region" description="Helical" evidence="1">
    <location>
        <begin position="219"/>
        <end position="239"/>
    </location>
</feature>
<feature type="transmembrane region" description="Helical" evidence="1">
    <location>
        <begin position="246"/>
        <end position="266"/>
    </location>
</feature>
<feature type="transmembrane region" description="Helical" evidence="1">
    <location>
        <begin position="273"/>
        <end position="293"/>
    </location>
</feature>
<feature type="transmembrane region" description="Helical" evidence="1">
    <location>
        <begin position="320"/>
        <end position="340"/>
    </location>
</feature>
<feature type="transmembrane region" description="Helical" evidence="1">
    <location>
        <begin position="351"/>
        <end position="371"/>
    </location>
</feature>
<name>Y1562_METJA</name>
<sequence>MVVLMLREILKKVAHFSEQKPFLMLLIILIITVFAGISATNVKSQTAFEKMLPQDNPIIKTLYEVRDEFGGTDVITICIKLKPSDSSDKVVDIRDPRVLKAIKELEDNLRYVDGITSVSSPVDIIIQKNNGIVPNDIDTVKDILNKLPEDKRKRIFNSDYSMTVVNAYTDAGGDQKKLMRVMDDVNERIEETPFPPGVEVIATGTPPMRKLMDELMKESQSFTTTVGLIGILIILIIYFRKPLSSIMPLLPVLIAVIWTGGAMGLLDIPLDMATAGIGSLILGLGIDYGIHLMHRYDEERRKGMPIDKAIETAVVETGTAVMATTATTVVGFLALVLAPLPMMANLGKVCALGISFCMVVVLTLLPALIVIEERHIMPLIKRLKGDTQ</sequence>
<organism>
    <name type="scientific">Methanocaldococcus jannaschii (strain ATCC 43067 / DSM 2661 / JAL-1 / JCM 10045 / NBRC 100440)</name>
    <name type="common">Methanococcus jannaschii</name>
    <dbReference type="NCBI Taxonomy" id="243232"/>
    <lineage>
        <taxon>Archaea</taxon>
        <taxon>Methanobacteriati</taxon>
        <taxon>Methanobacteriota</taxon>
        <taxon>Methanomada group</taxon>
        <taxon>Methanococci</taxon>
        <taxon>Methanococcales</taxon>
        <taxon>Methanocaldococcaceae</taxon>
        <taxon>Methanocaldococcus</taxon>
    </lineage>
</organism>
<dbReference type="EMBL" id="L77117">
    <property type="protein sequence ID" value="AAB99583.1"/>
    <property type="molecule type" value="Genomic_DNA"/>
</dbReference>
<dbReference type="PIR" id="A64495">
    <property type="entry name" value="A64495"/>
</dbReference>
<dbReference type="SMR" id="Q58957"/>
<dbReference type="STRING" id="243232.MJ_1562"/>
<dbReference type="TCDB" id="2.A.6.7.2">
    <property type="family name" value="the resistance-nodulation-cell division (rnd) superfamily"/>
</dbReference>
<dbReference type="PaxDb" id="243232-MJ_1562"/>
<dbReference type="EnsemblBacteria" id="AAB99583">
    <property type="protein sequence ID" value="AAB99583"/>
    <property type="gene ID" value="MJ_1562"/>
</dbReference>
<dbReference type="KEGG" id="mja:MJ_1562"/>
<dbReference type="eggNOG" id="arCOG02174">
    <property type="taxonomic scope" value="Archaea"/>
</dbReference>
<dbReference type="HOGENOM" id="CLU_060248_0_0_2"/>
<dbReference type="InParanoid" id="Q58957"/>
<dbReference type="PhylomeDB" id="Q58957"/>
<dbReference type="Proteomes" id="UP000000805">
    <property type="component" value="Chromosome"/>
</dbReference>
<dbReference type="GO" id="GO:0005886">
    <property type="term" value="C:plasma membrane"/>
    <property type="evidence" value="ECO:0007669"/>
    <property type="project" value="UniProtKB-SubCell"/>
</dbReference>
<dbReference type="Gene3D" id="1.20.1640.10">
    <property type="entry name" value="Multidrug efflux transporter AcrB transmembrane domain"/>
    <property type="match status" value="1"/>
</dbReference>
<dbReference type="InterPro" id="IPR004869">
    <property type="entry name" value="MMPL_dom"/>
</dbReference>
<dbReference type="InterPro" id="IPR050545">
    <property type="entry name" value="Mycobact_MmpL"/>
</dbReference>
<dbReference type="InterPro" id="IPR000731">
    <property type="entry name" value="SSD"/>
</dbReference>
<dbReference type="PANTHER" id="PTHR33406">
    <property type="entry name" value="MEMBRANE PROTEIN MJ1562-RELATED"/>
    <property type="match status" value="1"/>
</dbReference>
<dbReference type="PANTHER" id="PTHR33406:SF13">
    <property type="entry name" value="MEMBRANE PROTEIN YDFJ"/>
    <property type="match status" value="1"/>
</dbReference>
<dbReference type="Pfam" id="PF03176">
    <property type="entry name" value="MMPL"/>
    <property type="match status" value="1"/>
</dbReference>
<dbReference type="SUPFAM" id="SSF82866">
    <property type="entry name" value="Multidrug efflux transporter AcrB transmembrane domain"/>
    <property type="match status" value="1"/>
</dbReference>
<dbReference type="PROSITE" id="PS50156">
    <property type="entry name" value="SSD"/>
    <property type="match status" value="1"/>
</dbReference>
<accession>Q58957</accession>
<comment type="subcellular location">
    <subcellularLocation>
        <location evidence="2">Cell membrane</location>
        <topology evidence="2">Multi-pass membrane protein</topology>
    </subcellularLocation>
</comment>
<comment type="similarity">
    <text evidence="2">Belongs to the resistance-nodulation-cell division (RND) (TC 2.A.6) family. MmpL subfamily.</text>
</comment>